<sequence length="184" mass="19945">MGIEEKLPSGFLLTTVEGLAGYVRKGSLWPASFGLACCAIEMMATAGGRFDIARFGMEAFRASPRQADLMIVAGRVSQKMAPVLRQIYDQMVEPKWVLAMGVCASSGGMFNNYAIVQGVDHIVPVDIYLPGCPPRPEMLLNAILTLHEKIQQMPLGVHRDEVARAAEQAALAATPTIQMKGLLR</sequence>
<reference key="1">
    <citation type="submission" date="2009-03" db="EMBL/GenBank/DDBJ databases">
        <title>Comparison of the complete genome sequences of Rhodococcus erythropolis PR4 and Rhodococcus opacus B4.</title>
        <authorList>
            <person name="Takarada H."/>
            <person name="Sekine M."/>
            <person name="Hosoyama A."/>
            <person name="Yamada R."/>
            <person name="Fujisawa T."/>
            <person name="Omata S."/>
            <person name="Shimizu A."/>
            <person name="Tsukatani N."/>
            <person name="Tanikawa S."/>
            <person name="Fujita N."/>
            <person name="Harayama S."/>
        </authorList>
    </citation>
    <scope>NUCLEOTIDE SEQUENCE [LARGE SCALE GENOMIC DNA]</scope>
    <source>
        <strain>B4</strain>
    </source>
</reference>
<organism>
    <name type="scientific">Rhodococcus opacus (strain B4)</name>
    <dbReference type="NCBI Taxonomy" id="632772"/>
    <lineage>
        <taxon>Bacteria</taxon>
        <taxon>Bacillati</taxon>
        <taxon>Actinomycetota</taxon>
        <taxon>Actinomycetes</taxon>
        <taxon>Mycobacteriales</taxon>
        <taxon>Nocardiaceae</taxon>
        <taxon>Rhodococcus</taxon>
    </lineage>
</organism>
<gene>
    <name evidence="1" type="primary">nuoB</name>
    <name type="ordered locus">ROP_59720</name>
</gene>
<proteinExistence type="inferred from homology"/>
<comment type="function">
    <text evidence="1">NDH-1 shuttles electrons from NADH, via FMN and iron-sulfur (Fe-S) centers, to quinones in the respiratory chain. The immediate electron acceptor for the enzyme in this species is believed to be a menaquinone. Couples the redox reaction to proton translocation (for every two electrons transferred, four hydrogen ions are translocated across the cytoplasmic membrane), and thus conserves the redox energy in a proton gradient.</text>
</comment>
<comment type="catalytic activity">
    <reaction evidence="1">
        <text>a quinone + NADH + 5 H(+)(in) = a quinol + NAD(+) + 4 H(+)(out)</text>
        <dbReference type="Rhea" id="RHEA:57888"/>
        <dbReference type="ChEBI" id="CHEBI:15378"/>
        <dbReference type="ChEBI" id="CHEBI:24646"/>
        <dbReference type="ChEBI" id="CHEBI:57540"/>
        <dbReference type="ChEBI" id="CHEBI:57945"/>
        <dbReference type="ChEBI" id="CHEBI:132124"/>
    </reaction>
</comment>
<comment type="cofactor">
    <cofactor evidence="1">
        <name>[4Fe-4S] cluster</name>
        <dbReference type="ChEBI" id="CHEBI:49883"/>
    </cofactor>
    <text evidence="1">Binds 1 [4Fe-4S] cluster.</text>
</comment>
<comment type="subunit">
    <text evidence="1">NDH-1 is composed of 14 different subunits. Subunits NuoB, C, D, E, F, and G constitute the peripheral sector of the complex.</text>
</comment>
<comment type="subcellular location">
    <subcellularLocation>
        <location evidence="1">Cell membrane</location>
        <topology evidence="1">Peripheral membrane protein</topology>
        <orientation evidence="1">Cytoplasmic side</orientation>
    </subcellularLocation>
</comment>
<comment type="similarity">
    <text evidence="1">Belongs to the complex I 20 kDa subunit family.</text>
</comment>
<dbReference type="EC" id="7.1.1.-" evidence="1"/>
<dbReference type="EMBL" id="AP011115">
    <property type="protein sequence ID" value="BAH54219.1"/>
    <property type="molecule type" value="Genomic_DNA"/>
</dbReference>
<dbReference type="RefSeq" id="WP_015889710.1">
    <property type="nucleotide sequence ID" value="NC_012522.1"/>
</dbReference>
<dbReference type="SMR" id="C1AYM4"/>
<dbReference type="STRING" id="632772.ROP_59720"/>
<dbReference type="KEGG" id="rop:ROP_59720"/>
<dbReference type="PATRIC" id="fig|632772.20.peg.6238"/>
<dbReference type="HOGENOM" id="CLU_055737_7_3_11"/>
<dbReference type="OrthoDB" id="9786737at2"/>
<dbReference type="Proteomes" id="UP000002212">
    <property type="component" value="Chromosome"/>
</dbReference>
<dbReference type="GO" id="GO:0005886">
    <property type="term" value="C:plasma membrane"/>
    <property type="evidence" value="ECO:0007669"/>
    <property type="project" value="UniProtKB-SubCell"/>
</dbReference>
<dbReference type="GO" id="GO:0045271">
    <property type="term" value="C:respiratory chain complex I"/>
    <property type="evidence" value="ECO:0007669"/>
    <property type="project" value="TreeGrafter"/>
</dbReference>
<dbReference type="GO" id="GO:0051539">
    <property type="term" value="F:4 iron, 4 sulfur cluster binding"/>
    <property type="evidence" value="ECO:0007669"/>
    <property type="project" value="UniProtKB-KW"/>
</dbReference>
<dbReference type="GO" id="GO:0005506">
    <property type="term" value="F:iron ion binding"/>
    <property type="evidence" value="ECO:0007669"/>
    <property type="project" value="UniProtKB-UniRule"/>
</dbReference>
<dbReference type="GO" id="GO:0008137">
    <property type="term" value="F:NADH dehydrogenase (ubiquinone) activity"/>
    <property type="evidence" value="ECO:0007669"/>
    <property type="project" value="InterPro"/>
</dbReference>
<dbReference type="GO" id="GO:0050136">
    <property type="term" value="F:NADH:ubiquinone reductase (non-electrogenic) activity"/>
    <property type="evidence" value="ECO:0007669"/>
    <property type="project" value="UniProtKB-UniRule"/>
</dbReference>
<dbReference type="GO" id="GO:0048038">
    <property type="term" value="F:quinone binding"/>
    <property type="evidence" value="ECO:0007669"/>
    <property type="project" value="UniProtKB-KW"/>
</dbReference>
<dbReference type="GO" id="GO:0009060">
    <property type="term" value="P:aerobic respiration"/>
    <property type="evidence" value="ECO:0007669"/>
    <property type="project" value="TreeGrafter"/>
</dbReference>
<dbReference type="GO" id="GO:0015990">
    <property type="term" value="P:electron transport coupled proton transport"/>
    <property type="evidence" value="ECO:0007669"/>
    <property type="project" value="TreeGrafter"/>
</dbReference>
<dbReference type="FunFam" id="3.40.50.12280:FF:000004">
    <property type="entry name" value="NADH-quinone oxidoreductase subunit B"/>
    <property type="match status" value="1"/>
</dbReference>
<dbReference type="Gene3D" id="3.40.50.12280">
    <property type="match status" value="1"/>
</dbReference>
<dbReference type="HAMAP" id="MF_01356">
    <property type="entry name" value="NDH1_NuoB"/>
    <property type="match status" value="1"/>
</dbReference>
<dbReference type="InterPro" id="IPR006137">
    <property type="entry name" value="NADH_UbQ_OxRdtase-like_20kDa"/>
</dbReference>
<dbReference type="InterPro" id="IPR006138">
    <property type="entry name" value="NADH_UQ_OxRdtase_20Kd_su"/>
</dbReference>
<dbReference type="NCBIfam" id="TIGR01957">
    <property type="entry name" value="nuoB_fam"/>
    <property type="match status" value="1"/>
</dbReference>
<dbReference type="NCBIfam" id="NF005012">
    <property type="entry name" value="PRK06411.1"/>
    <property type="match status" value="1"/>
</dbReference>
<dbReference type="PANTHER" id="PTHR11995">
    <property type="entry name" value="NADH DEHYDROGENASE"/>
    <property type="match status" value="1"/>
</dbReference>
<dbReference type="PANTHER" id="PTHR11995:SF14">
    <property type="entry name" value="NADH DEHYDROGENASE [UBIQUINONE] IRON-SULFUR PROTEIN 7, MITOCHONDRIAL"/>
    <property type="match status" value="1"/>
</dbReference>
<dbReference type="Pfam" id="PF01058">
    <property type="entry name" value="Oxidored_q6"/>
    <property type="match status" value="1"/>
</dbReference>
<dbReference type="SUPFAM" id="SSF56770">
    <property type="entry name" value="HydA/Nqo6-like"/>
    <property type="match status" value="1"/>
</dbReference>
<dbReference type="PROSITE" id="PS01150">
    <property type="entry name" value="COMPLEX1_20K"/>
    <property type="match status" value="1"/>
</dbReference>
<protein>
    <recommendedName>
        <fullName evidence="1">NADH-quinone oxidoreductase subunit B</fullName>
        <ecNumber evidence="1">7.1.1.-</ecNumber>
    </recommendedName>
    <alternativeName>
        <fullName evidence="1">NADH dehydrogenase I subunit B</fullName>
    </alternativeName>
    <alternativeName>
        <fullName evidence="1">NDH-1 subunit B</fullName>
    </alternativeName>
</protein>
<name>NUOB_RHOOB</name>
<accession>C1AYM4</accession>
<evidence type="ECO:0000255" key="1">
    <source>
        <dbReference type="HAMAP-Rule" id="MF_01356"/>
    </source>
</evidence>
<keyword id="KW-0004">4Fe-4S</keyword>
<keyword id="KW-1003">Cell membrane</keyword>
<keyword id="KW-0408">Iron</keyword>
<keyword id="KW-0411">Iron-sulfur</keyword>
<keyword id="KW-0472">Membrane</keyword>
<keyword id="KW-0479">Metal-binding</keyword>
<keyword id="KW-0520">NAD</keyword>
<keyword id="KW-0874">Quinone</keyword>
<keyword id="KW-1278">Translocase</keyword>
<keyword id="KW-0813">Transport</keyword>
<feature type="chain" id="PRO_1000166662" description="NADH-quinone oxidoreductase subunit B">
    <location>
        <begin position="1"/>
        <end position="184"/>
    </location>
</feature>
<feature type="binding site" evidence="1">
    <location>
        <position position="37"/>
    </location>
    <ligand>
        <name>[4Fe-4S] cluster</name>
        <dbReference type="ChEBI" id="CHEBI:49883"/>
    </ligand>
</feature>
<feature type="binding site" evidence="1">
    <location>
        <position position="38"/>
    </location>
    <ligand>
        <name>[4Fe-4S] cluster</name>
        <dbReference type="ChEBI" id="CHEBI:49883"/>
    </ligand>
</feature>
<feature type="binding site" evidence="1">
    <location>
        <position position="103"/>
    </location>
    <ligand>
        <name>[4Fe-4S] cluster</name>
        <dbReference type="ChEBI" id="CHEBI:49883"/>
    </ligand>
</feature>
<feature type="binding site" evidence="1">
    <location>
        <position position="132"/>
    </location>
    <ligand>
        <name>[4Fe-4S] cluster</name>
        <dbReference type="ChEBI" id="CHEBI:49883"/>
    </ligand>
</feature>